<evidence type="ECO:0000255" key="1">
    <source>
        <dbReference type="HAMAP-Rule" id="MF_01600"/>
    </source>
</evidence>
<evidence type="ECO:0000256" key="2">
    <source>
        <dbReference type="SAM" id="MobiDB-lite"/>
    </source>
</evidence>
<name>Y8670_RHOJR</name>
<geneLocation type="plasmid">
    <name>pRHL1</name>
</geneLocation>
<sequence length="991" mass="107741">MQPSDRMRALPRRARVMIMVTVALIALLVIGPRLVVGYTDWLWFGEVGYRRVWGTVLVTRLILFTAVTLLVGAVIFAAVVWAYRSRPLFAASGANTAKDPVERYREVVSRRPRSFTVGIALLLALPFGLHAQASWETVQLFLHGGAFGTVDAEFGYDIGFYVFDLPFYRLILAWLFIAVFLALLIGLGTHYLFGGIRLAPSKDHVIEVSRPARVQLAVFAGTFIALKAASYWLDRYSLLWSGRKEPTFTGAGYTDINAVLPARLIMVAIAVLCAVAFFAAIAVRDLRIPAMATALLVLSAILVGGIYPALIEQFSVRPNAADRESPYIERNIAATRQAYGIGPDRVDYLDYPGVGTRSPRDIPADVTTIANARLLDPTVLSRTFTQQQQLKNFYGFPEHLNIDRYTIDGQLTDYIVAARELSPNSLSGNQTQWINRHTVYTHGNGFIAAPANRVNAAVRDVAGQSASSDSGYPIYAVSDIASQVGGDQVIPVEQPRIYFGEVIAQADPDYAIVGGPEGVPPREYDTDTAQYTYTGTGGVPVGSWVNRLAFAARYGERNILFSGAIGSESKIIFNRDPAARVEHVAPWLTTDSNPYPAVVGGRIVWIVDGYTTAAHYPYSQVGSLAEPVVNDTGRTLAREEVSYVRNSVKATVDAYDGTVTLYQVDENDPVLGAWMKVFPGTVQPPTAIPTELRAHFRYPEDLFRLQRDLLAKYHVDDPREFFTTNAFWSVPSDPTADTGGEQPPYYVLVGDAGTAAPSFRLTSAMVGFNREFLSAYLSAHSDPENYGRIDILRLPTDTQTQGPRQTQNSMISDTRVASERTLLERSNRIYYANLLTLPIADGGILYVEPVFTERLTSTPNSSTFPQLARVLVSYREPGTGGVRIGYAPTLAEALDQVFGTGTGAVATAPGGDATTPPPTGGQPPAPPPPGAPPAPPPATSDQLTAAVLELNNALANLREAQHTGDFTTYGAALDRLQQAIDTYLAAGGTPH</sequence>
<organism>
    <name type="scientific">Rhodococcus jostii (strain RHA1)</name>
    <dbReference type="NCBI Taxonomy" id="101510"/>
    <lineage>
        <taxon>Bacteria</taxon>
        <taxon>Bacillati</taxon>
        <taxon>Actinomycetota</taxon>
        <taxon>Actinomycetes</taxon>
        <taxon>Mycobacteriales</taxon>
        <taxon>Nocardiaceae</taxon>
        <taxon>Rhodococcus</taxon>
    </lineage>
</organism>
<protein>
    <recommendedName>
        <fullName evidence="1">UPF0182 protein RHA1_ro08670</fullName>
    </recommendedName>
</protein>
<comment type="subcellular location">
    <subcellularLocation>
        <location evidence="1">Cell membrane</location>
        <topology evidence="1">Multi-pass membrane protein</topology>
    </subcellularLocation>
</comment>
<comment type="similarity">
    <text evidence="1">Belongs to the UPF0182 family.</text>
</comment>
<reference key="1">
    <citation type="journal article" date="2006" name="Proc. Natl. Acad. Sci. U.S.A.">
        <title>The complete genome of Rhodococcus sp. RHA1 provides insights into a catabolic powerhouse.</title>
        <authorList>
            <person name="McLeod M.P."/>
            <person name="Warren R.L."/>
            <person name="Hsiao W.W.L."/>
            <person name="Araki N."/>
            <person name="Myhre M."/>
            <person name="Fernandes C."/>
            <person name="Miyazawa D."/>
            <person name="Wong W."/>
            <person name="Lillquist A.L."/>
            <person name="Wang D."/>
            <person name="Dosanjh M."/>
            <person name="Hara H."/>
            <person name="Petrescu A."/>
            <person name="Morin R.D."/>
            <person name="Yang G."/>
            <person name="Stott J.M."/>
            <person name="Schein J.E."/>
            <person name="Shin H."/>
            <person name="Smailus D."/>
            <person name="Siddiqui A.S."/>
            <person name="Marra M.A."/>
            <person name="Jones S.J.M."/>
            <person name="Holt R."/>
            <person name="Brinkman F.S.L."/>
            <person name="Miyauchi K."/>
            <person name="Fukuda M."/>
            <person name="Davies J.E."/>
            <person name="Mohn W.W."/>
            <person name="Eltis L.D."/>
        </authorList>
    </citation>
    <scope>NUCLEOTIDE SEQUENCE [LARGE SCALE GENOMIC DNA]</scope>
    <source>
        <strain>RHA1</strain>
    </source>
</reference>
<dbReference type="EMBL" id="CP000432">
    <property type="protein sequence ID" value="ABG99714.1"/>
    <property type="molecule type" value="Genomic_DNA"/>
</dbReference>
<dbReference type="RefSeq" id="WP_011599396.1">
    <property type="nucleotide sequence ID" value="NC_008269.1"/>
</dbReference>
<dbReference type="SMR" id="Q0RYC2"/>
<dbReference type="KEGG" id="rha:RHA1_ro08670"/>
<dbReference type="HOGENOM" id="CLU_007733_1_0_11"/>
<dbReference type="Proteomes" id="UP000008710">
    <property type="component" value="Plasmid pRHL1"/>
</dbReference>
<dbReference type="GO" id="GO:0005576">
    <property type="term" value="C:extracellular region"/>
    <property type="evidence" value="ECO:0007669"/>
    <property type="project" value="TreeGrafter"/>
</dbReference>
<dbReference type="GO" id="GO:0005886">
    <property type="term" value="C:plasma membrane"/>
    <property type="evidence" value="ECO:0007669"/>
    <property type="project" value="UniProtKB-SubCell"/>
</dbReference>
<dbReference type="HAMAP" id="MF_01600">
    <property type="entry name" value="UPF0182"/>
    <property type="match status" value="1"/>
</dbReference>
<dbReference type="InterPro" id="IPR005372">
    <property type="entry name" value="UPF0182"/>
</dbReference>
<dbReference type="NCBIfam" id="NF000825">
    <property type="entry name" value="PRK00068.1"/>
    <property type="match status" value="1"/>
</dbReference>
<dbReference type="NCBIfam" id="NF009097">
    <property type="entry name" value="PRK12438.1"/>
    <property type="match status" value="1"/>
</dbReference>
<dbReference type="PANTHER" id="PTHR39344">
    <property type="entry name" value="UPF0182 PROTEIN SLL1060"/>
    <property type="match status" value="1"/>
</dbReference>
<dbReference type="PANTHER" id="PTHR39344:SF1">
    <property type="entry name" value="UPF0182 PROTEIN SLL1060"/>
    <property type="match status" value="1"/>
</dbReference>
<dbReference type="Pfam" id="PF03699">
    <property type="entry name" value="UPF0182"/>
    <property type="match status" value="1"/>
</dbReference>
<keyword id="KW-1003">Cell membrane</keyword>
<keyword id="KW-0472">Membrane</keyword>
<keyword id="KW-0614">Plasmid</keyword>
<keyword id="KW-0812">Transmembrane</keyword>
<keyword id="KW-1133">Transmembrane helix</keyword>
<accession>Q0RYC2</accession>
<feature type="chain" id="PRO_0000291292" description="UPF0182 protein RHA1_ro08670">
    <location>
        <begin position="1"/>
        <end position="991"/>
    </location>
</feature>
<feature type="transmembrane region" description="Helical" evidence="1">
    <location>
        <begin position="16"/>
        <end position="36"/>
    </location>
</feature>
<feature type="transmembrane region" description="Helical" evidence="1">
    <location>
        <begin position="61"/>
        <end position="81"/>
    </location>
</feature>
<feature type="transmembrane region" description="Helical" evidence="1">
    <location>
        <begin position="115"/>
        <end position="135"/>
    </location>
</feature>
<feature type="transmembrane region" description="Helical" evidence="1">
    <location>
        <begin position="170"/>
        <end position="190"/>
    </location>
</feature>
<feature type="transmembrane region" description="Helical" evidence="1">
    <location>
        <begin position="214"/>
        <end position="234"/>
    </location>
</feature>
<feature type="transmembrane region" description="Helical" evidence="1">
    <location>
        <begin position="263"/>
        <end position="283"/>
    </location>
</feature>
<feature type="transmembrane region" description="Helical" evidence="1">
    <location>
        <begin position="291"/>
        <end position="311"/>
    </location>
</feature>
<feature type="region of interest" description="Disordered" evidence="2">
    <location>
        <begin position="902"/>
        <end position="940"/>
    </location>
</feature>
<feature type="compositionally biased region" description="Low complexity" evidence="2">
    <location>
        <begin position="903"/>
        <end position="914"/>
    </location>
</feature>
<feature type="compositionally biased region" description="Pro residues" evidence="2">
    <location>
        <begin position="915"/>
        <end position="938"/>
    </location>
</feature>
<gene>
    <name type="ordered locus">RHA1_ro08670</name>
</gene>
<proteinExistence type="inferred from homology"/>